<dbReference type="EC" id="2.6.99.2" evidence="1"/>
<dbReference type="EMBL" id="CP000031">
    <property type="protein sequence ID" value="AAV96436.1"/>
    <property type="molecule type" value="Genomic_DNA"/>
</dbReference>
<dbReference type="RefSeq" id="WP_011048891.1">
    <property type="nucleotide sequence ID" value="NC_003911.12"/>
</dbReference>
<dbReference type="SMR" id="Q3V7J3"/>
<dbReference type="STRING" id="246200.SPO3201"/>
<dbReference type="PaxDb" id="246200-SPO3201"/>
<dbReference type="KEGG" id="sil:SPO3201"/>
<dbReference type="eggNOG" id="COG0854">
    <property type="taxonomic scope" value="Bacteria"/>
</dbReference>
<dbReference type="HOGENOM" id="CLU_074563_0_0_5"/>
<dbReference type="OrthoDB" id="9806590at2"/>
<dbReference type="UniPathway" id="UPA00244">
    <property type="reaction ID" value="UER00313"/>
</dbReference>
<dbReference type="Proteomes" id="UP000001023">
    <property type="component" value="Chromosome"/>
</dbReference>
<dbReference type="GO" id="GO:0005829">
    <property type="term" value="C:cytosol"/>
    <property type="evidence" value="ECO:0007669"/>
    <property type="project" value="TreeGrafter"/>
</dbReference>
<dbReference type="GO" id="GO:0033856">
    <property type="term" value="F:pyridoxine 5'-phosphate synthase activity"/>
    <property type="evidence" value="ECO:0007669"/>
    <property type="project" value="UniProtKB-EC"/>
</dbReference>
<dbReference type="GO" id="GO:0008615">
    <property type="term" value="P:pyridoxine biosynthetic process"/>
    <property type="evidence" value="ECO:0007669"/>
    <property type="project" value="UniProtKB-UniRule"/>
</dbReference>
<dbReference type="CDD" id="cd00003">
    <property type="entry name" value="PNPsynthase"/>
    <property type="match status" value="1"/>
</dbReference>
<dbReference type="Gene3D" id="3.20.20.70">
    <property type="entry name" value="Aldolase class I"/>
    <property type="match status" value="1"/>
</dbReference>
<dbReference type="HAMAP" id="MF_00279">
    <property type="entry name" value="PdxJ"/>
    <property type="match status" value="1"/>
</dbReference>
<dbReference type="InterPro" id="IPR013785">
    <property type="entry name" value="Aldolase_TIM"/>
</dbReference>
<dbReference type="InterPro" id="IPR004569">
    <property type="entry name" value="PyrdxlP_synth_PdxJ"/>
</dbReference>
<dbReference type="InterPro" id="IPR036130">
    <property type="entry name" value="Pyridoxine-5'_phos_synth"/>
</dbReference>
<dbReference type="NCBIfam" id="TIGR00559">
    <property type="entry name" value="pdxJ"/>
    <property type="match status" value="1"/>
</dbReference>
<dbReference type="NCBIfam" id="NF003624">
    <property type="entry name" value="PRK05265.1-2"/>
    <property type="match status" value="1"/>
</dbReference>
<dbReference type="NCBIfam" id="NF003625">
    <property type="entry name" value="PRK05265.1-3"/>
    <property type="match status" value="1"/>
</dbReference>
<dbReference type="NCBIfam" id="NF003627">
    <property type="entry name" value="PRK05265.1-5"/>
    <property type="match status" value="1"/>
</dbReference>
<dbReference type="PANTHER" id="PTHR30456">
    <property type="entry name" value="PYRIDOXINE 5'-PHOSPHATE SYNTHASE"/>
    <property type="match status" value="1"/>
</dbReference>
<dbReference type="PANTHER" id="PTHR30456:SF0">
    <property type="entry name" value="PYRIDOXINE 5'-PHOSPHATE SYNTHASE"/>
    <property type="match status" value="1"/>
</dbReference>
<dbReference type="Pfam" id="PF03740">
    <property type="entry name" value="PdxJ"/>
    <property type="match status" value="1"/>
</dbReference>
<dbReference type="SUPFAM" id="SSF63892">
    <property type="entry name" value="Pyridoxine 5'-phosphate synthase"/>
    <property type="match status" value="1"/>
</dbReference>
<organism>
    <name type="scientific">Ruegeria pomeroyi (strain ATCC 700808 / DSM 15171 / DSS-3)</name>
    <name type="common">Silicibacter pomeroyi</name>
    <dbReference type="NCBI Taxonomy" id="246200"/>
    <lineage>
        <taxon>Bacteria</taxon>
        <taxon>Pseudomonadati</taxon>
        <taxon>Pseudomonadota</taxon>
        <taxon>Alphaproteobacteria</taxon>
        <taxon>Rhodobacterales</taxon>
        <taxon>Roseobacteraceae</taxon>
        <taxon>Ruegeria</taxon>
    </lineage>
</organism>
<accession>Q3V7J3</accession>
<reference key="1">
    <citation type="journal article" date="2004" name="Nature">
        <title>Genome sequence of Silicibacter pomeroyi reveals adaptations to the marine environment.</title>
        <authorList>
            <person name="Moran M.A."/>
            <person name="Buchan A."/>
            <person name="Gonzalez J.M."/>
            <person name="Heidelberg J.F."/>
            <person name="Whitman W.B."/>
            <person name="Kiene R.P."/>
            <person name="Henriksen J.R."/>
            <person name="King G.M."/>
            <person name="Belas R."/>
            <person name="Fuqua C."/>
            <person name="Brinkac L.M."/>
            <person name="Lewis M."/>
            <person name="Johri S."/>
            <person name="Weaver B."/>
            <person name="Pai G."/>
            <person name="Eisen J.A."/>
            <person name="Rahe E."/>
            <person name="Sheldon W.M."/>
            <person name="Ye W."/>
            <person name="Miller T.R."/>
            <person name="Carlton J."/>
            <person name="Rasko D.A."/>
            <person name="Paulsen I.T."/>
            <person name="Ren Q."/>
            <person name="Daugherty S.C."/>
            <person name="DeBoy R.T."/>
            <person name="Dodson R.J."/>
            <person name="Durkin A.S."/>
            <person name="Madupu R."/>
            <person name="Nelson W.C."/>
            <person name="Sullivan S.A."/>
            <person name="Rosovitz M.J."/>
            <person name="Haft D.H."/>
            <person name="Selengut J."/>
            <person name="Ward N."/>
        </authorList>
    </citation>
    <scope>NUCLEOTIDE SEQUENCE [LARGE SCALE GENOMIC DNA]</scope>
    <source>
        <strain>ATCC 700808 / DSM 15171 / DSS-3</strain>
    </source>
</reference>
<reference key="2">
    <citation type="journal article" date="2014" name="Stand. Genomic Sci.">
        <title>An updated genome annotation for the model marine bacterium Ruegeria pomeroyi DSS-3.</title>
        <authorList>
            <person name="Rivers A.R."/>
            <person name="Smith C.B."/>
            <person name="Moran M.A."/>
        </authorList>
    </citation>
    <scope>GENOME REANNOTATION</scope>
    <source>
        <strain>ATCC 700808 / DSM 15171 / DSS-3</strain>
    </source>
</reference>
<proteinExistence type="inferred from homology"/>
<sequence>MSVPHLRLGVNIDHVATVRNARGGEYPDPIRAAKIAEQAGADGITAHLREDRRHITDADIDGLMAALSVPLNFEMAATDEMQKIALRHKPHAVCIVPEKREERTTEGGLEVAREENRLAHFIAPLREVGCRVSIFIAADRRQVEAAHRIGAQVIELHTGAYCDAHAEGDFATRDRELEALREMSAFAHSLGLEVHAGHGLTYDTVQPVAAFPEVMELNIGHFLIGEAIFRGLHPAIAEMRRLMDEARA</sequence>
<protein>
    <recommendedName>
        <fullName evidence="1">Pyridoxine 5'-phosphate synthase</fullName>
        <shortName evidence="1">PNP synthase</shortName>
        <ecNumber evidence="1">2.6.99.2</ecNumber>
    </recommendedName>
</protein>
<gene>
    <name evidence="1" type="primary">pdxJ</name>
    <name type="ordered locus">SPO3201</name>
</gene>
<evidence type="ECO:0000255" key="1">
    <source>
        <dbReference type="HAMAP-Rule" id="MF_00279"/>
    </source>
</evidence>
<keyword id="KW-0963">Cytoplasm</keyword>
<keyword id="KW-0664">Pyridoxine biosynthesis</keyword>
<keyword id="KW-1185">Reference proteome</keyword>
<keyword id="KW-0808">Transferase</keyword>
<comment type="function">
    <text evidence="1">Catalyzes the complicated ring closure reaction between the two acyclic compounds 1-deoxy-D-xylulose-5-phosphate (DXP) and 3-amino-2-oxopropyl phosphate (1-amino-acetone-3-phosphate or AAP) to form pyridoxine 5'-phosphate (PNP) and inorganic phosphate.</text>
</comment>
<comment type="catalytic activity">
    <reaction evidence="1">
        <text>3-amino-2-oxopropyl phosphate + 1-deoxy-D-xylulose 5-phosphate = pyridoxine 5'-phosphate + phosphate + 2 H2O + H(+)</text>
        <dbReference type="Rhea" id="RHEA:15265"/>
        <dbReference type="ChEBI" id="CHEBI:15377"/>
        <dbReference type="ChEBI" id="CHEBI:15378"/>
        <dbReference type="ChEBI" id="CHEBI:43474"/>
        <dbReference type="ChEBI" id="CHEBI:57279"/>
        <dbReference type="ChEBI" id="CHEBI:57792"/>
        <dbReference type="ChEBI" id="CHEBI:58589"/>
        <dbReference type="EC" id="2.6.99.2"/>
    </reaction>
</comment>
<comment type="pathway">
    <text evidence="1">Cofactor biosynthesis; pyridoxine 5'-phosphate biosynthesis; pyridoxine 5'-phosphate from D-erythrose 4-phosphate: step 5/5.</text>
</comment>
<comment type="subunit">
    <text evidence="1">Homooctamer; tetramer of dimers.</text>
</comment>
<comment type="subcellular location">
    <subcellularLocation>
        <location evidence="1">Cytoplasm</location>
    </subcellularLocation>
</comment>
<comment type="similarity">
    <text evidence="1">Belongs to the PNP synthase family.</text>
</comment>
<feature type="chain" id="PRO_0000231848" description="Pyridoxine 5'-phosphate synthase">
    <location>
        <begin position="1"/>
        <end position="248"/>
    </location>
</feature>
<feature type="active site" description="Proton acceptor" evidence="1">
    <location>
        <position position="47"/>
    </location>
</feature>
<feature type="active site" description="Proton acceptor" evidence="1">
    <location>
        <position position="74"/>
    </location>
</feature>
<feature type="active site" description="Proton donor" evidence="1">
    <location>
        <position position="198"/>
    </location>
</feature>
<feature type="binding site" evidence="1">
    <location>
        <position position="11"/>
    </location>
    <ligand>
        <name>3-amino-2-oxopropyl phosphate</name>
        <dbReference type="ChEBI" id="CHEBI:57279"/>
    </ligand>
</feature>
<feature type="binding site" evidence="1">
    <location>
        <begin position="13"/>
        <end position="14"/>
    </location>
    <ligand>
        <name>1-deoxy-D-xylulose 5-phosphate</name>
        <dbReference type="ChEBI" id="CHEBI:57792"/>
    </ligand>
</feature>
<feature type="binding site" evidence="1">
    <location>
        <position position="22"/>
    </location>
    <ligand>
        <name>3-amino-2-oxopropyl phosphate</name>
        <dbReference type="ChEBI" id="CHEBI:57279"/>
    </ligand>
</feature>
<feature type="binding site" evidence="1">
    <location>
        <position position="49"/>
    </location>
    <ligand>
        <name>1-deoxy-D-xylulose 5-phosphate</name>
        <dbReference type="ChEBI" id="CHEBI:57792"/>
    </ligand>
</feature>
<feature type="binding site" evidence="1">
    <location>
        <position position="54"/>
    </location>
    <ligand>
        <name>1-deoxy-D-xylulose 5-phosphate</name>
        <dbReference type="ChEBI" id="CHEBI:57792"/>
    </ligand>
</feature>
<feature type="binding site" evidence="1">
    <location>
        <position position="104"/>
    </location>
    <ligand>
        <name>1-deoxy-D-xylulose 5-phosphate</name>
        <dbReference type="ChEBI" id="CHEBI:57792"/>
    </ligand>
</feature>
<feature type="binding site" evidence="1">
    <location>
        <position position="199"/>
    </location>
    <ligand>
        <name>3-amino-2-oxopropyl phosphate</name>
        <dbReference type="ChEBI" id="CHEBI:57279"/>
    </ligand>
</feature>
<feature type="binding site" evidence="1">
    <location>
        <begin position="220"/>
        <end position="221"/>
    </location>
    <ligand>
        <name>3-amino-2-oxopropyl phosphate</name>
        <dbReference type="ChEBI" id="CHEBI:57279"/>
    </ligand>
</feature>
<feature type="site" description="Transition state stabilizer" evidence="1">
    <location>
        <position position="155"/>
    </location>
</feature>
<name>PDXJ_RUEPO</name>